<keyword id="KW-0002">3D-structure</keyword>
<keyword id="KW-0175">Coiled coil</keyword>
<keyword id="KW-0472">Membrane</keyword>
<keyword id="KW-0812">Transmembrane</keyword>
<keyword id="KW-1133">Transmembrane helix</keyword>
<gene>
    <name type="ordered locus">PH1511</name>
</gene>
<evidence type="ECO:0000255" key="1"/>
<evidence type="ECO:0000269" key="2">
    <source>
    </source>
</evidence>
<evidence type="ECO:0000269" key="3">
    <source>
    </source>
</evidence>
<evidence type="ECO:0000269" key="4">
    <source>
    </source>
</evidence>
<evidence type="ECO:0000305" key="5"/>
<evidence type="ECO:0007829" key="6">
    <source>
        <dbReference type="PDB" id="3BK6"/>
    </source>
</evidence>
<evidence type="ECO:0007829" key="7">
    <source>
        <dbReference type="PDB" id="8GN9"/>
    </source>
</evidence>
<comment type="subunit">
    <text evidence="2 3 4">Homotrimer. Interacts with PH1510 and is cleaved by PH1510.</text>
</comment>
<comment type="subcellular location">
    <subcellularLocation>
        <location evidence="5">Membrane</location>
        <topology evidence="5">Single-pass membrane protein</topology>
    </subcellularLocation>
</comment>
<comment type="similarity">
    <text evidence="5">Belongs to the band 7/mec-2 family.</text>
</comment>
<name>PSTOM_PYRHO</name>
<feature type="chain" id="PRO_0000094067" description="Stomatin homolog PH1511">
    <location>
        <begin position="1"/>
        <end position="266"/>
    </location>
</feature>
<feature type="transmembrane region" description="Helical" evidence="1">
    <location>
        <begin position="7"/>
        <end position="27"/>
    </location>
</feature>
<feature type="coiled-coil region" evidence="1">
    <location>
        <begin position="125"/>
        <end position="152"/>
    </location>
</feature>
<feature type="coiled-coil region" evidence="2">
    <location>
        <begin position="178"/>
        <end position="213"/>
    </location>
</feature>
<feature type="strand" evidence="6">
    <location>
        <begin position="57"/>
        <end position="59"/>
    </location>
</feature>
<feature type="strand" evidence="7">
    <location>
        <begin position="66"/>
        <end position="78"/>
    </location>
</feature>
<feature type="strand" evidence="7">
    <location>
        <begin position="84"/>
        <end position="95"/>
    </location>
</feature>
<feature type="helix" evidence="7">
    <location>
        <begin position="98"/>
        <end position="103"/>
    </location>
</feature>
<feature type="strand" evidence="7">
    <location>
        <begin position="104"/>
        <end position="106"/>
    </location>
</feature>
<feature type="helix" evidence="7">
    <location>
        <begin position="108"/>
        <end position="125"/>
    </location>
</feature>
<feature type="helix" evidence="7">
    <location>
        <begin position="129"/>
        <end position="134"/>
    </location>
</feature>
<feature type="helix" evidence="7">
    <location>
        <begin position="136"/>
        <end position="151"/>
    </location>
</feature>
<feature type="helix" evidence="7">
    <location>
        <begin position="152"/>
        <end position="154"/>
    </location>
</feature>
<feature type="strand" evidence="7">
    <location>
        <begin position="156"/>
        <end position="167"/>
    </location>
</feature>
<feature type="helix" evidence="6">
    <location>
        <begin position="172"/>
        <end position="212"/>
    </location>
</feature>
<feature type="helix" evidence="6">
    <location>
        <begin position="216"/>
        <end position="221"/>
    </location>
</feature>
<accession>O59180</accession>
<organism>
    <name type="scientific">Pyrococcus horikoshii (strain ATCC 700860 / DSM 12428 / JCM 9974 / NBRC 100139 / OT-3)</name>
    <dbReference type="NCBI Taxonomy" id="70601"/>
    <lineage>
        <taxon>Archaea</taxon>
        <taxon>Methanobacteriati</taxon>
        <taxon>Methanobacteriota</taxon>
        <taxon>Thermococci</taxon>
        <taxon>Thermococcales</taxon>
        <taxon>Thermococcaceae</taxon>
        <taxon>Pyrococcus</taxon>
    </lineage>
</organism>
<sequence length="266" mass="29999">MMFATNFFVTSIILLFILIFLASAIKIVKEYERAVIFRLGRVVGARGPGLFFIIPIFEKAVIVDLRTQVLDVPVQETITKDNVPVRVNAVVYFRVVDPVKAVTQVKNYIMATSQISQTTLRSVIGQAHLDELLSERDKLNMQLQRIIDEATDPWGIKVTAVEIKDVELPAGMQKAMARQAEAERERRARITLAEAERQAAEKLREAAEIISEHPMALQLRTLQTISDVAGDKSNVIVLMLPMEMLKLFKSLSDAAEAYMKKKEEEK</sequence>
<proteinExistence type="evidence at protein level"/>
<protein>
    <recommendedName>
        <fullName>Stomatin homolog PH1511</fullName>
    </recommendedName>
    <alternativeName>
        <fullName>Prokaryotic stomatin</fullName>
        <shortName>P-stomatin</shortName>
    </alternativeName>
</protein>
<dbReference type="EMBL" id="BA000001">
    <property type="protein sequence ID" value="BAA30619.1"/>
    <property type="molecule type" value="Genomic_DNA"/>
</dbReference>
<dbReference type="PIR" id="C71027">
    <property type="entry name" value="C71027"/>
</dbReference>
<dbReference type="RefSeq" id="WP_010885588.1">
    <property type="nucleotide sequence ID" value="NC_000961.1"/>
</dbReference>
<dbReference type="PDB" id="3BK6">
    <property type="method" value="X-ray"/>
    <property type="resolution" value="3.20 A"/>
    <property type="chains" value="A/B/C=56-234"/>
</dbReference>
<dbReference type="PDB" id="3VIV">
    <property type="method" value="X-ray"/>
    <property type="resolution" value="2.25 A"/>
    <property type="chains" value="C=234-243"/>
</dbReference>
<dbReference type="PDB" id="3WG5">
    <property type="method" value="X-ray"/>
    <property type="resolution" value="2.40 A"/>
    <property type="chains" value="C=234-243"/>
</dbReference>
<dbReference type="PDB" id="8GN9">
    <property type="method" value="X-ray"/>
    <property type="resolution" value="2.50 A"/>
    <property type="chains" value="A=62-170"/>
</dbReference>
<dbReference type="PDBsum" id="3BK6"/>
<dbReference type="PDBsum" id="3VIV"/>
<dbReference type="PDBsum" id="3WG5"/>
<dbReference type="PDBsum" id="8GN9"/>
<dbReference type="SMR" id="O59180"/>
<dbReference type="STRING" id="70601.gene:9378493"/>
<dbReference type="TCDB" id="8.A.21.2.1">
    <property type="family name" value="the stomatin/podocin/band 7/nephrosis,2/spfh (stomatin) family"/>
</dbReference>
<dbReference type="EnsemblBacteria" id="BAA30619">
    <property type="protein sequence ID" value="BAA30619"/>
    <property type="gene ID" value="BAA30619"/>
</dbReference>
<dbReference type="GeneID" id="1443827"/>
<dbReference type="KEGG" id="pho:PH1511"/>
<dbReference type="eggNOG" id="arCOG01915">
    <property type="taxonomic scope" value="Archaea"/>
</dbReference>
<dbReference type="OrthoDB" id="10752at2157"/>
<dbReference type="EvolutionaryTrace" id="O59180"/>
<dbReference type="Proteomes" id="UP000000752">
    <property type="component" value="Chromosome"/>
</dbReference>
<dbReference type="GO" id="GO:0005886">
    <property type="term" value="C:plasma membrane"/>
    <property type="evidence" value="ECO:0007669"/>
    <property type="project" value="InterPro"/>
</dbReference>
<dbReference type="CDD" id="cd08826">
    <property type="entry name" value="SPFH_eoslipins_u1"/>
    <property type="match status" value="1"/>
</dbReference>
<dbReference type="FunFam" id="3.30.479.30:FF:000004">
    <property type="entry name" value="Putative membrane protease family, stomatin"/>
    <property type="match status" value="1"/>
</dbReference>
<dbReference type="Gene3D" id="6.10.250.2090">
    <property type="match status" value="1"/>
</dbReference>
<dbReference type="Gene3D" id="3.30.479.30">
    <property type="entry name" value="Band 7 domain"/>
    <property type="match status" value="1"/>
</dbReference>
<dbReference type="InterPro" id="IPR043202">
    <property type="entry name" value="Band-7_stomatin-like"/>
</dbReference>
<dbReference type="InterPro" id="IPR001107">
    <property type="entry name" value="Band_7"/>
</dbReference>
<dbReference type="InterPro" id="IPR036013">
    <property type="entry name" value="Band_7/SPFH_dom_sf"/>
</dbReference>
<dbReference type="InterPro" id="IPR018080">
    <property type="entry name" value="Band_7/stomatin-like_CS"/>
</dbReference>
<dbReference type="InterPro" id="IPR001972">
    <property type="entry name" value="Stomatin_HflK_fam"/>
</dbReference>
<dbReference type="PANTHER" id="PTHR10264:SF19">
    <property type="entry name" value="AT06885P-RELATED"/>
    <property type="match status" value="1"/>
</dbReference>
<dbReference type="PANTHER" id="PTHR10264">
    <property type="entry name" value="BAND 7 PROTEIN-RELATED"/>
    <property type="match status" value="1"/>
</dbReference>
<dbReference type="Pfam" id="PF01145">
    <property type="entry name" value="Band_7"/>
    <property type="match status" value="1"/>
</dbReference>
<dbReference type="PRINTS" id="PR00721">
    <property type="entry name" value="STOMATIN"/>
</dbReference>
<dbReference type="SMART" id="SM00244">
    <property type="entry name" value="PHB"/>
    <property type="match status" value="1"/>
</dbReference>
<dbReference type="SUPFAM" id="SSF117892">
    <property type="entry name" value="Band 7/SPFH domain"/>
    <property type="match status" value="1"/>
</dbReference>
<dbReference type="PROSITE" id="PS01270">
    <property type="entry name" value="BAND_7"/>
    <property type="match status" value="1"/>
</dbReference>
<reference key="1">
    <citation type="journal article" date="1998" name="DNA Res.">
        <title>Complete sequence and gene organization of the genome of a hyper-thermophilic archaebacterium, Pyrococcus horikoshii OT3.</title>
        <authorList>
            <person name="Kawarabayasi Y."/>
            <person name="Sawada M."/>
            <person name="Horikawa H."/>
            <person name="Haikawa Y."/>
            <person name="Hino Y."/>
            <person name="Yamamoto S."/>
            <person name="Sekine M."/>
            <person name="Baba S."/>
            <person name="Kosugi H."/>
            <person name="Hosoyama A."/>
            <person name="Nagai Y."/>
            <person name="Sakai M."/>
            <person name="Ogura K."/>
            <person name="Otsuka R."/>
            <person name="Nakazawa H."/>
            <person name="Takamiya M."/>
            <person name="Ohfuku Y."/>
            <person name="Funahashi T."/>
            <person name="Tanaka T."/>
            <person name="Kudoh Y."/>
            <person name="Yamazaki J."/>
            <person name="Kushida N."/>
            <person name="Oguchi A."/>
            <person name="Aoki K."/>
            <person name="Yoshizawa T."/>
            <person name="Nakamura Y."/>
            <person name="Robb F.T."/>
            <person name="Horikoshi K."/>
            <person name="Masuchi Y."/>
            <person name="Shizuya H."/>
            <person name="Kikuchi H."/>
        </authorList>
    </citation>
    <scope>NUCLEOTIDE SEQUENCE [LARGE SCALE GENOMIC DNA]</scope>
    <source>
        <strain>ATCC 700860 / DSM 12428 / JCM 9974 / NBRC 100139 / OT-3</strain>
    </source>
</reference>
<reference key="2">
    <citation type="journal article" date="2008" name="J. Mol. Biol.">
        <title>Crystal structure of a core domain of stomatin from Pyrococcus horikoshii illustrates a novel trimeric and coiled-coil fold.</title>
        <authorList>
            <person name="Yokoyama H."/>
            <person name="Fujii S."/>
            <person name="Matsui I."/>
        </authorList>
    </citation>
    <scope>X-RAY CRYSTALLOGRAPHY (3.20 ANGSTROMS) OF 56-234</scope>
    <scope>SUBUNIT</scope>
    <scope>COILED COIL</scope>
</reference>
<reference key="3">
    <citation type="journal article" date="2012" name="Biochemistry">
        <title>Crystal structure of a membrane stomatin-specific protease in complex with a substrate peptide.</title>
        <authorList>
            <person name="Yokoyama H."/>
            <person name="Takizawa N."/>
            <person name="Kobayashi D."/>
            <person name="Matsui I."/>
            <person name="Fujii S."/>
        </authorList>
    </citation>
    <scope>X-RAY CRYSTALLOGRAPHY (2.25 ANGSTROMS) OF 234-243 IN COMPLEX WITH PH1510</scope>
</reference>
<reference key="4">
    <citation type="journal article" date="2013" name="J. Synchrotron Radiat.">
        <title>Structural and biochemical analysis of a thermostable membrane-bound stomatin-specific protease.</title>
        <authorList>
            <person name="Yokoyama H."/>
            <person name="Kobayashi D."/>
            <person name="Takizawa N."/>
            <person name="Fujii S."/>
            <person name="Matsui I."/>
        </authorList>
    </citation>
    <scope>X-RAY CRYSTALLOGRAPHY (2.40 ANGSTROMS) OF 234-243 IN COMPLEX WITH PH1510</scope>
</reference>